<name>YQGF_CLOK5</name>
<reference key="1">
    <citation type="journal article" date="2008" name="Proc. Natl. Acad. Sci. U.S.A.">
        <title>The genome of Clostridium kluyveri, a strict anaerobe with unique metabolic features.</title>
        <authorList>
            <person name="Seedorf H."/>
            <person name="Fricke W.F."/>
            <person name="Veith B."/>
            <person name="Brueggemann H."/>
            <person name="Liesegang H."/>
            <person name="Strittmatter A."/>
            <person name="Miethke M."/>
            <person name="Buckel W."/>
            <person name="Hinderberger J."/>
            <person name="Li F."/>
            <person name="Hagemeier C."/>
            <person name="Thauer R.K."/>
            <person name="Gottschalk G."/>
        </authorList>
    </citation>
    <scope>NUCLEOTIDE SEQUENCE [LARGE SCALE GENOMIC DNA]</scope>
    <source>
        <strain>ATCC 8527 / DSM 555 / NBRC 12016 / NCIMB 10680 / K1</strain>
    </source>
</reference>
<proteinExistence type="inferred from homology"/>
<accession>A5N7T7</accession>
<feature type="chain" id="PRO_1000082741" description="Putative pre-16S rRNA nuclease">
    <location>
        <begin position="1"/>
        <end position="137"/>
    </location>
</feature>
<keyword id="KW-0963">Cytoplasm</keyword>
<keyword id="KW-0378">Hydrolase</keyword>
<keyword id="KW-0540">Nuclease</keyword>
<keyword id="KW-1185">Reference proteome</keyword>
<keyword id="KW-0690">Ribosome biogenesis</keyword>
<evidence type="ECO:0000255" key="1">
    <source>
        <dbReference type="HAMAP-Rule" id="MF_00651"/>
    </source>
</evidence>
<sequence length="137" mass="15232">MRILGLDIGNKTIGVALSDPLGITAQGITTIKRKGEDRDIEELKAICDKYKVEVIVCGLPKNMNGTLGPQSEKVLKFCNIIEEVINLPIKMWDERLTTVAANKAMLEADLSRAKRKKIVDKMAATYILQGYLDRISK</sequence>
<dbReference type="EC" id="3.1.-.-" evidence="1"/>
<dbReference type="EMBL" id="CP000673">
    <property type="protein sequence ID" value="EDK33368.1"/>
    <property type="molecule type" value="Genomic_DNA"/>
</dbReference>
<dbReference type="SMR" id="A5N7T7"/>
<dbReference type="STRING" id="431943.CKL_1326"/>
<dbReference type="KEGG" id="ckl:CKL_1326"/>
<dbReference type="eggNOG" id="COG0816">
    <property type="taxonomic scope" value="Bacteria"/>
</dbReference>
<dbReference type="HOGENOM" id="CLU_098240_2_0_9"/>
<dbReference type="Proteomes" id="UP000002411">
    <property type="component" value="Chromosome"/>
</dbReference>
<dbReference type="GO" id="GO:0005829">
    <property type="term" value="C:cytosol"/>
    <property type="evidence" value="ECO:0007669"/>
    <property type="project" value="TreeGrafter"/>
</dbReference>
<dbReference type="GO" id="GO:0004518">
    <property type="term" value="F:nuclease activity"/>
    <property type="evidence" value="ECO:0007669"/>
    <property type="project" value="UniProtKB-KW"/>
</dbReference>
<dbReference type="GO" id="GO:0000967">
    <property type="term" value="P:rRNA 5'-end processing"/>
    <property type="evidence" value="ECO:0007669"/>
    <property type="project" value="UniProtKB-UniRule"/>
</dbReference>
<dbReference type="CDD" id="cd16964">
    <property type="entry name" value="YqgF"/>
    <property type="match status" value="1"/>
</dbReference>
<dbReference type="Gene3D" id="3.30.420.140">
    <property type="entry name" value="YqgF/RNase H-like domain"/>
    <property type="match status" value="1"/>
</dbReference>
<dbReference type="HAMAP" id="MF_00651">
    <property type="entry name" value="Nuclease_YqgF"/>
    <property type="match status" value="1"/>
</dbReference>
<dbReference type="InterPro" id="IPR012337">
    <property type="entry name" value="RNaseH-like_sf"/>
</dbReference>
<dbReference type="InterPro" id="IPR005227">
    <property type="entry name" value="YqgF"/>
</dbReference>
<dbReference type="InterPro" id="IPR006641">
    <property type="entry name" value="YqgF/RNaseH-like_dom"/>
</dbReference>
<dbReference type="InterPro" id="IPR037027">
    <property type="entry name" value="YqgF/RNaseH-like_dom_sf"/>
</dbReference>
<dbReference type="NCBIfam" id="TIGR00250">
    <property type="entry name" value="RNAse_H_YqgF"/>
    <property type="match status" value="1"/>
</dbReference>
<dbReference type="PANTHER" id="PTHR33317">
    <property type="entry name" value="POLYNUCLEOTIDYL TRANSFERASE, RIBONUCLEASE H-LIKE SUPERFAMILY PROTEIN"/>
    <property type="match status" value="1"/>
</dbReference>
<dbReference type="PANTHER" id="PTHR33317:SF4">
    <property type="entry name" value="POLYNUCLEOTIDYL TRANSFERASE, RIBONUCLEASE H-LIKE SUPERFAMILY PROTEIN"/>
    <property type="match status" value="1"/>
</dbReference>
<dbReference type="Pfam" id="PF03652">
    <property type="entry name" value="RuvX"/>
    <property type="match status" value="1"/>
</dbReference>
<dbReference type="SMART" id="SM00732">
    <property type="entry name" value="YqgFc"/>
    <property type="match status" value="1"/>
</dbReference>
<dbReference type="SUPFAM" id="SSF53098">
    <property type="entry name" value="Ribonuclease H-like"/>
    <property type="match status" value="1"/>
</dbReference>
<gene>
    <name type="ordered locus">CKL_1326</name>
</gene>
<organism>
    <name type="scientific">Clostridium kluyveri (strain ATCC 8527 / DSM 555 / NBRC 12016 / NCIMB 10680 / K1)</name>
    <dbReference type="NCBI Taxonomy" id="431943"/>
    <lineage>
        <taxon>Bacteria</taxon>
        <taxon>Bacillati</taxon>
        <taxon>Bacillota</taxon>
        <taxon>Clostridia</taxon>
        <taxon>Eubacteriales</taxon>
        <taxon>Clostridiaceae</taxon>
        <taxon>Clostridium</taxon>
    </lineage>
</organism>
<comment type="function">
    <text evidence="1">Could be a nuclease involved in processing of the 5'-end of pre-16S rRNA.</text>
</comment>
<comment type="subcellular location">
    <subcellularLocation>
        <location evidence="1">Cytoplasm</location>
    </subcellularLocation>
</comment>
<comment type="similarity">
    <text evidence="1">Belongs to the YqgF nuclease family.</text>
</comment>
<protein>
    <recommendedName>
        <fullName evidence="1">Putative pre-16S rRNA nuclease</fullName>
        <ecNumber evidence="1">3.1.-.-</ecNumber>
    </recommendedName>
</protein>